<sequence length="326" mass="36724">MDIKPKKYKPTKEEYIKSFKDMLLLRRFEEKCGQLYGMGEIGGFCHLYIGQEAVISAVDTVKQKGDSTITSYRDHAHIILAGTEPKYVLAELMGRATGCSKGKGGSMHLFDIPNKFYGGHGIVGAQVPIGTGLAFAEKYNGTNNICFTFLGDGAVNQGQVYEAFNMAALWGLPVVYIIENNEYSMGTSVARSTFMRDLYKKGESFGIKGFQLDGMDFEEMYNGAKQAAEYVRENSFPLILEVKTYRYRGHSMSDPAKYRSKEEVEQYKERDPLVIIRKTILDNKYATEADLKEIEQSVKEIVKEAVKFSENSPLPDEGELYTEVYC</sequence>
<accession>Q4UKQ6</accession>
<evidence type="ECO:0000250" key="1"/>
<organism>
    <name type="scientific">Rickettsia felis (strain ATCC VR-1525 / URRWXCal2)</name>
    <name type="common">Rickettsia azadi</name>
    <dbReference type="NCBI Taxonomy" id="315456"/>
    <lineage>
        <taxon>Bacteria</taxon>
        <taxon>Pseudomonadati</taxon>
        <taxon>Pseudomonadota</taxon>
        <taxon>Alphaproteobacteria</taxon>
        <taxon>Rickettsiales</taxon>
        <taxon>Rickettsiaceae</taxon>
        <taxon>Rickettsieae</taxon>
        <taxon>Rickettsia</taxon>
        <taxon>spotted fever group</taxon>
    </lineage>
</organism>
<keyword id="KW-0560">Oxidoreductase</keyword>
<keyword id="KW-0670">Pyruvate</keyword>
<keyword id="KW-0786">Thiamine pyrophosphate</keyword>
<name>ODPA_RICFE</name>
<protein>
    <recommendedName>
        <fullName>Pyruvate dehydrogenase E1 component subunit alpha</fullName>
        <ecNumber>1.2.4.1</ecNumber>
    </recommendedName>
</protein>
<gene>
    <name type="primary">pdhA</name>
    <name type="ordered locus">RF_1020</name>
</gene>
<reference key="1">
    <citation type="journal article" date="2005" name="PLoS Biol.">
        <title>The genome sequence of Rickettsia felis identifies the first putative conjugative plasmid in an obligate intracellular parasite.</title>
        <authorList>
            <person name="Ogata H."/>
            <person name="Renesto P."/>
            <person name="Audic S."/>
            <person name="Robert C."/>
            <person name="Blanc G."/>
            <person name="Fournier P.-E."/>
            <person name="Parinello H."/>
            <person name="Claverie J.-M."/>
            <person name="Raoult D."/>
        </authorList>
    </citation>
    <scope>NUCLEOTIDE SEQUENCE [LARGE SCALE GENOMIC DNA]</scope>
    <source>
        <strain>ATCC VR-1525 / URRWXCal2</strain>
    </source>
</reference>
<comment type="function">
    <text evidence="1">The pyruvate dehydrogenase complex catalyzes the overall conversion of pyruvate to acetyl-CoA and CO(2). It contains multiple copies of three enzymatic components: pyruvate dehydrogenase (E1), dihydrolipoamide acetyltransferase (E2) and lipoamide dehydrogenase (E3) (By similarity).</text>
</comment>
<comment type="catalytic activity">
    <reaction>
        <text>N(6)-[(R)-lipoyl]-L-lysyl-[protein] + pyruvate + H(+) = N(6)-[(R)-S(8)-acetyldihydrolipoyl]-L-lysyl-[protein] + CO2</text>
        <dbReference type="Rhea" id="RHEA:19189"/>
        <dbReference type="Rhea" id="RHEA-COMP:10474"/>
        <dbReference type="Rhea" id="RHEA-COMP:10478"/>
        <dbReference type="ChEBI" id="CHEBI:15361"/>
        <dbReference type="ChEBI" id="CHEBI:15378"/>
        <dbReference type="ChEBI" id="CHEBI:16526"/>
        <dbReference type="ChEBI" id="CHEBI:83099"/>
        <dbReference type="ChEBI" id="CHEBI:83111"/>
        <dbReference type="EC" id="1.2.4.1"/>
    </reaction>
</comment>
<comment type="cofactor">
    <cofactor evidence="1">
        <name>thiamine diphosphate</name>
        <dbReference type="ChEBI" id="CHEBI:58937"/>
    </cofactor>
</comment>
<comment type="subunit">
    <text>Heterodimer of an alpha and a beta chain.</text>
</comment>
<proteinExistence type="inferred from homology"/>
<feature type="chain" id="PRO_0000288753" description="Pyruvate dehydrogenase E1 component subunit alpha">
    <location>
        <begin position="1"/>
        <end position="326"/>
    </location>
</feature>
<dbReference type="EC" id="1.2.4.1"/>
<dbReference type="EMBL" id="CP000053">
    <property type="protein sequence ID" value="AAY61871.1"/>
    <property type="molecule type" value="Genomic_DNA"/>
</dbReference>
<dbReference type="SMR" id="Q4UKQ6"/>
<dbReference type="STRING" id="315456.RF_1020"/>
<dbReference type="KEGG" id="rfe:RF_1020"/>
<dbReference type="eggNOG" id="COG1071">
    <property type="taxonomic scope" value="Bacteria"/>
</dbReference>
<dbReference type="HOGENOM" id="CLU_029393_5_0_5"/>
<dbReference type="OrthoDB" id="9766715at2"/>
<dbReference type="Proteomes" id="UP000008548">
    <property type="component" value="Chromosome"/>
</dbReference>
<dbReference type="GO" id="GO:0043231">
    <property type="term" value="C:intracellular membrane-bounded organelle"/>
    <property type="evidence" value="ECO:0007669"/>
    <property type="project" value="InterPro"/>
</dbReference>
<dbReference type="GO" id="GO:0004739">
    <property type="term" value="F:pyruvate dehydrogenase (acetyl-transferring) activity"/>
    <property type="evidence" value="ECO:0007669"/>
    <property type="project" value="UniProtKB-EC"/>
</dbReference>
<dbReference type="GO" id="GO:0006086">
    <property type="term" value="P:pyruvate decarboxylation to acetyl-CoA"/>
    <property type="evidence" value="ECO:0007669"/>
    <property type="project" value="InterPro"/>
</dbReference>
<dbReference type="CDD" id="cd02000">
    <property type="entry name" value="TPP_E1_PDC_ADC_BCADC"/>
    <property type="match status" value="1"/>
</dbReference>
<dbReference type="FunFam" id="3.40.50.970:FF:000013">
    <property type="entry name" value="Pyruvate dehydrogenase E1 component subunit alpha"/>
    <property type="match status" value="1"/>
</dbReference>
<dbReference type="Gene3D" id="3.40.50.970">
    <property type="match status" value="1"/>
</dbReference>
<dbReference type="InterPro" id="IPR001017">
    <property type="entry name" value="DH_E1"/>
</dbReference>
<dbReference type="InterPro" id="IPR050642">
    <property type="entry name" value="PDH_E1_Alpha_Subunit"/>
</dbReference>
<dbReference type="InterPro" id="IPR017597">
    <property type="entry name" value="Pyrv_DH_E1_asu_subgrp-y"/>
</dbReference>
<dbReference type="InterPro" id="IPR029061">
    <property type="entry name" value="THDP-binding"/>
</dbReference>
<dbReference type="NCBIfam" id="TIGR03182">
    <property type="entry name" value="PDH_E1_alph_y"/>
    <property type="match status" value="1"/>
</dbReference>
<dbReference type="PANTHER" id="PTHR11516:SF60">
    <property type="entry name" value="PYRUVATE DEHYDROGENASE E1 COMPONENT SUBUNIT ALPHA"/>
    <property type="match status" value="1"/>
</dbReference>
<dbReference type="PANTHER" id="PTHR11516">
    <property type="entry name" value="PYRUVATE DEHYDROGENASE E1 COMPONENT, ALPHA SUBUNIT BACTERIAL AND ORGANELLAR"/>
    <property type="match status" value="1"/>
</dbReference>
<dbReference type="Pfam" id="PF00676">
    <property type="entry name" value="E1_dh"/>
    <property type="match status" value="1"/>
</dbReference>
<dbReference type="SUPFAM" id="SSF52518">
    <property type="entry name" value="Thiamin diphosphate-binding fold (THDP-binding)"/>
    <property type="match status" value="1"/>
</dbReference>